<comment type="subunit">
    <text evidence="1">Forms oligomers.</text>
</comment>
<comment type="subcellular location">
    <subcellularLocation>
        <location evidence="1">Cytoplasm</location>
        <location evidence="1">Nucleoid</location>
    </subcellularLocation>
</comment>
<comment type="similarity">
    <text evidence="1">Belongs to the MraZ family.</text>
</comment>
<keyword id="KW-0963">Cytoplasm</keyword>
<keyword id="KW-0238">DNA-binding</keyword>
<keyword id="KW-0677">Repeat</keyword>
<keyword id="KW-0804">Transcription</keyword>
<keyword id="KW-0805">Transcription regulation</keyword>
<feature type="chain" id="PRO_0000108526" description="Transcriptional regulator MraZ">
    <location>
        <begin position="1"/>
        <end position="149"/>
    </location>
</feature>
<feature type="domain" description="SpoVT-AbrB 1" evidence="2">
    <location>
        <begin position="7"/>
        <end position="54"/>
    </location>
</feature>
<feature type="domain" description="SpoVT-AbrB 2" evidence="2">
    <location>
        <begin position="83"/>
        <end position="126"/>
    </location>
</feature>
<protein>
    <recommendedName>
        <fullName>Transcriptional regulator MraZ</fullName>
    </recommendedName>
</protein>
<reference key="1">
    <citation type="journal article" date="2001" name="Science">
        <title>Mechanisms of evolution in Rickettsia conorii and R. prowazekii.</title>
        <authorList>
            <person name="Ogata H."/>
            <person name="Audic S."/>
            <person name="Renesto-Audiffren P."/>
            <person name="Fournier P.-E."/>
            <person name="Barbe V."/>
            <person name="Samson D."/>
            <person name="Roux V."/>
            <person name="Cossart P."/>
            <person name="Weissenbach J."/>
            <person name="Claverie J.-M."/>
            <person name="Raoult D."/>
        </authorList>
    </citation>
    <scope>NUCLEOTIDE SEQUENCE [LARGE SCALE GENOMIC DNA]</scope>
    <source>
        <strain>ATCC VR-613 / Malish 7</strain>
    </source>
</reference>
<accession>Q92HB3</accession>
<proteinExistence type="inferred from homology"/>
<evidence type="ECO:0000255" key="1">
    <source>
        <dbReference type="HAMAP-Rule" id="MF_01008"/>
    </source>
</evidence>
<evidence type="ECO:0000255" key="2">
    <source>
        <dbReference type="PROSITE-ProRule" id="PRU01076"/>
    </source>
</evidence>
<gene>
    <name evidence="1" type="primary">mraZ</name>
    <name type="ordered locus">RC0858</name>
</gene>
<name>MRAZ_RICCN</name>
<dbReference type="EMBL" id="AE006914">
    <property type="protein sequence ID" value="AAL03396.1"/>
    <property type="molecule type" value="Genomic_DNA"/>
</dbReference>
<dbReference type="PIR" id="B97807">
    <property type="entry name" value="B97807"/>
</dbReference>
<dbReference type="RefSeq" id="WP_010977464.1">
    <property type="nucleotide sequence ID" value="NC_003103.1"/>
</dbReference>
<dbReference type="SMR" id="Q92HB3"/>
<dbReference type="GeneID" id="927822"/>
<dbReference type="KEGG" id="rco:RC0858"/>
<dbReference type="HOGENOM" id="CLU_107907_1_0_5"/>
<dbReference type="Proteomes" id="UP000000816">
    <property type="component" value="Chromosome"/>
</dbReference>
<dbReference type="GO" id="GO:0005737">
    <property type="term" value="C:cytoplasm"/>
    <property type="evidence" value="ECO:0007669"/>
    <property type="project" value="UniProtKB-UniRule"/>
</dbReference>
<dbReference type="GO" id="GO:0009295">
    <property type="term" value="C:nucleoid"/>
    <property type="evidence" value="ECO:0007669"/>
    <property type="project" value="UniProtKB-SubCell"/>
</dbReference>
<dbReference type="GO" id="GO:0003700">
    <property type="term" value="F:DNA-binding transcription factor activity"/>
    <property type="evidence" value="ECO:0007669"/>
    <property type="project" value="UniProtKB-UniRule"/>
</dbReference>
<dbReference type="GO" id="GO:0000976">
    <property type="term" value="F:transcription cis-regulatory region binding"/>
    <property type="evidence" value="ECO:0007669"/>
    <property type="project" value="TreeGrafter"/>
</dbReference>
<dbReference type="GO" id="GO:2000143">
    <property type="term" value="P:negative regulation of DNA-templated transcription initiation"/>
    <property type="evidence" value="ECO:0007669"/>
    <property type="project" value="TreeGrafter"/>
</dbReference>
<dbReference type="CDD" id="cd16321">
    <property type="entry name" value="MraZ_C"/>
    <property type="match status" value="1"/>
</dbReference>
<dbReference type="CDD" id="cd16320">
    <property type="entry name" value="MraZ_N"/>
    <property type="match status" value="1"/>
</dbReference>
<dbReference type="Gene3D" id="3.40.1550.20">
    <property type="entry name" value="Transcriptional regulator MraZ domain"/>
    <property type="match status" value="1"/>
</dbReference>
<dbReference type="HAMAP" id="MF_01008">
    <property type="entry name" value="MraZ"/>
    <property type="match status" value="1"/>
</dbReference>
<dbReference type="InterPro" id="IPR003444">
    <property type="entry name" value="MraZ"/>
</dbReference>
<dbReference type="InterPro" id="IPR035644">
    <property type="entry name" value="MraZ_C"/>
</dbReference>
<dbReference type="InterPro" id="IPR020603">
    <property type="entry name" value="MraZ_dom"/>
</dbReference>
<dbReference type="InterPro" id="IPR035642">
    <property type="entry name" value="MraZ_N"/>
</dbReference>
<dbReference type="InterPro" id="IPR038619">
    <property type="entry name" value="MraZ_sf"/>
</dbReference>
<dbReference type="InterPro" id="IPR007159">
    <property type="entry name" value="SpoVT-AbrB_dom"/>
</dbReference>
<dbReference type="InterPro" id="IPR037914">
    <property type="entry name" value="SpoVT-AbrB_sf"/>
</dbReference>
<dbReference type="NCBIfam" id="NF001475">
    <property type="entry name" value="PRK00326.2-1"/>
    <property type="match status" value="1"/>
</dbReference>
<dbReference type="PANTHER" id="PTHR34701">
    <property type="entry name" value="TRANSCRIPTIONAL REGULATOR MRAZ"/>
    <property type="match status" value="1"/>
</dbReference>
<dbReference type="PANTHER" id="PTHR34701:SF1">
    <property type="entry name" value="TRANSCRIPTIONAL REGULATOR MRAZ"/>
    <property type="match status" value="1"/>
</dbReference>
<dbReference type="Pfam" id="PF02381">
    <property type="entry name" value="MraZ"/>
    <property type="match status" value="1"/>
</dbReference>
<dbReference type="SUPFAM" id="SSF89447">
    <property type="entry name" value="AbrB/MazE/MraZ-like"/>
    <property type="match status" value="1"/>
</dbReference>
<dbReference type="PROSITE" id="PS51740">
    <property type="entry name" value="SPOVT_ABRB"/>
    <property type="match status" value="2"/>
</dbReference>
<sequence>MNVFLSKYVNGVDKKSRVSVPANYRAVLGKELFNGVIAYPSIRNNCIEVCGISHIEKLRQMIETLDPYSEERDAFETMIFGEAVQLSFDGEGRVILPQSLMKHAGIEEQACFVGKGVIFEIWQPQNFEKYLNAAQKIAHEKRLTLRNAH</sequence>
<organism>
    <name type="scientific">Rickettsia conorii (strain ATCC VR-613 / Malish 7)</name>
    <dbReference type="NCBI Taxonomy" id="272944"/>
    <lineage>
        <taxon>Bacteria</taxon>
        <taxon>Pseudomonadati</taxon>
        <taxon>Pseudomonadota</taxon>
        <taxon>Alphaproteobacteria</taxon>
        <taxon>Rickettsiales</taxon>
        <taxon>Rickettsiaceae</taxon>
        <taxon>Rickettsieae</taxon>
        <taxon>Rickettsia</taxon>
        <taxon>spotted fever group</taxon>
    </lineage>
</organism>